<feature type="peptide" id="PRO_0000378808" description="Periviscerokinin-2" evidence="2">
    <location>
        <begin position="1"/>
        <end position="11"/>
    </location>
</feature>
<feature type="modified residue" description="Valine amide" evidence="2">
    <location>
        <position position="11"/>
    </location>
</feature>
<sequence>GSSGLISMPRV</sequence>
<dbReference type="GO" id="GO:0005576">
    <property type="term" value="C:extracellular region"/>
    <property type="evidence" value="ECO:0007669"/>
    <property type="project" value="UniProtKB-SubCell"/>
</dbReference>
<dbReference type="GO" id="GO:0007218">
    <property type="term" value="P:neuropeptide signaling pathway"/>
    <property type="evidence" value="ECO:0007669"/>
    <property type="project" value="UniProtKB-KW"/>
</dbReference>
<dbReference type="InterPro" id="IPR013231">
    <property type="entry name" value="Periviscerokinin"/>
</dbReference>
<dbReference type="Pfam" id="PF08259">
    <property type="entry name" value="Periviscerokin"/>
    <property type="match status" value="1"/>
</dbReference>
<accession>P85735</accession>
<proteinExistence type="evidence at protein level"/>
<name>PVK2_PILDU</name>
<comment type="function">
    <text evidence="4">Mediates visceral muscle contractile activity (myotropic activity).</text>
</comment>
<comment type="subcellular location">
    <subcellularLocation>
        <location evidence="4">Secreted</location>
    </subcellularLocation>
</comment>
<comment type="similarity">
    <text evidence="1">Belongs to the periviscerokinin family.</text>
</comment>
<organism>
    <name type="scientific">Pilema dubia</name>
    <name type="common">Cockroach</name>
    <name type="synonym">Pilema reflexa</name>
    <dbReference type="NCBI Taxonomy" id="521525"/>
    <lineage>
        <taxon>Eukaryota</taxon>
        <taxon>Metazoa</taxon>
        <taxon>Ecdysozoa</taxon>
        <taxon>Arthropoda</taxon>
        <taxon>Hexapoda</taxon>
        <taxon>Insecta</taxon>
        <taxon>Pterygota</taxon>
        <taxon>Neoptera</taxon>
        <taxon>Polyneoptera</taxon>
        <taxon>Dictyoptera</taxon>
        <taxon>Blattodea</taxon>
        <taxon>Blaberoidea</taxon>
        <taxon>Blaberidae</taxon>
        <taxon>Perisphaerinae</taxon>
        <taxon>Pilema</taxon>
    </lineage>
</organism>
<protein>
    <recommendedName>
        <fullName evidence="3">Periviscerokinin-2</fullName>
        <shortName evidence="3">PilDu-PVK-2</shortName>
    </recommendedName>
</protein>
<evidence type="ECO:0000255" key="1"/>
<evidence type="ECO:0000269" key="2">
    <source>
    </source>
</evidence>
<evidence type="ECO:0000303" key="3">
    <source>
    </source>
</evidence>
<evidence type="ECO:0000305" key="4"/>
<keyword id="KW-0027">Amidation</keyword>
<keyword id="KW-0903">Direct protein sequencing</keyword>
<keyword id="KW-0527">Neuropeptide</keyword>
<keyword id="KW-0964">Secreted</keyword>
<reference evidence="4" key="1">
    <citation type="journal article" date="2009" name="BMC Evol. Biol.">
        <title>A proteomic approach for studying insect phylogeny: CAPA peptides of ancient insect taxa (Dictyoptera, Blattoptera) as a test case.</title>
        <authorList>
            <person name="Roth S."/>
            <person name="Fromm B."/>
            <person name="Gaede G."/>
            <person name="Predel R."/>
        </authorList>
    </citation>
    <scope>PROTEIN SEQUENCE</scope>
    <scope>AMIDATION AT VAL-11</scope>
    <source>
        <tissue evidence="2">Abdominal perisympathetic organs</tissue>
    </source>
</reference>